<evidence type="ECO:0000255" key="1">
    <source>
        <dbReference type="HAMAP-Rule" id="MF_01547"/>
    </source>
</evidence>
<organism>
    <name type="scientific">Cupriavidus taiwanensis (strain DSM 17343 / BCRC 17206 / CCUG 44338 / CIP 107171 / LMG 19424 / R1)</name>
    <name type="common">Ralstonia taiwanensis (strain LMG 19424)</name>
    <dbReference type="NCBI Taxonomy" id="977880"/>
    <lineage>
        <taxon>Bacteria</taxon>
        <taxon>Pseudomonadati</taxon>
        <taxon>Pseudomonadota</taxon>
        <taxon>Betaproteobacteria</taxon>
        <taxon>Burkholderiales</taxon>
        <taxon>Burkholderiaceae</taxon>
        <taxon>Cupriavidus</taxon>
    </lineage>
</organism>
<dbReference type="EC" id="2.1.1.166" evidence="1"/>
<dbReference type="EMBL" id="CU633749">
    <property type="protein sequence ID" value="CAQ69920.1"/>
    <property type="molecule type" value="Genomic_DNA"/>
</dbReference>
<dbReference type="RefSeq" id="WP_012353230.1">
    <property type="nucleotide sequence ID" value="NC_010528.1"/>
</dbReference>
<dbReference type="SMR" id="B3R1S2"/>
<dbReference type="GeneID" id="29761281"/>
<dbReference type="KEGG" id="cti:RALTA_A1979"/>
<dbReference type="eggNOG" id="COG0293">
    <property type="taxonomic scope" value="Bacteria"/>
</dbReference>
<dbReference type="HOGENOM" id="CLU_009422_4_1_4"/>
<dbReference type="BioCyc" id="CTAI977880:RALTA_RS09590-MONOMER"/>
<dbReference type="Proteomes" id="UP000001692">
    <property type="component" value="Chromosome 1"/>
</dbReference>
<dbReference type="GO" id="GO:0005737">
    <property type="term" value="C:cytoplasm"/>
    <property type="evidence" value="ECO:0007669"/>
    <property type="project" value="UniProtKB-SubCell"/>
</dbReference>
<dbReference type="GO" id="GO:0008650">
    <property type="term" value="F:rRNA (uridine-2'-O-)-methyltransferase activity"/>
    <property type="evidence" value="ECO:0007669"/>
    <property type="project" value="UniProtKB-UniRule"/>
</dbReference>
<dbReference type="FunFam" id="3.40.50.150:FF:000005">
    <property type="entry name" value="Ribosomal RNA large subunit methyltransferase E"/>
    <property type="match status" value="1"/>
</dbReference>
<dbReference type="Gene3D" id="3.40.50.150">
    <property type="entry name" value="Vaccinia Virus protein VP39"/>
    <property type="match status" value="1"/>
</dbReference>
<dbReference type="HAMAP" id="MF_01547">
    <property type="entry name" value="RNA_methyltr_E"/>
    <property type="match status" value="1"/>
</dbReference>
<dbReference type="InterPro" id="IPR050082">
    <property type="entry name" value="RNA_methyltr_RlmE"/>
</dbReference>
<dbReference type="InterPro" id="IPR002877">
    <property type="entry name" value="RNA_MeTrfase_FtsJ_dom"/>
</dbReference>
<dbReference type="InterPro" id="IPR015507">
    <property type="entry name" value="rRNA-MeTfrase_E"/>
</dbReference>
<dbReference type="InterPro" id="IPR029063">
    <property type="entry name" value="SAM-dependent_MTases_sf"/>
</dbReference>
<dbReference type="PANTHER" id="PTHR10920">
    <property type="entry name" value="RIBOSOMAL RNA METHYLTRANSFERASE"/>
    <property type="match status" value="1"/>
</dbReference>
<dbReference type="PANTHER" id="PTHR10920:SF18">
    <property type="entry name" value="RRNA METHYLTRANSFERASE 2, MITOCHONDRIAL"/>
    <property type="match status" value="1"/>
</dbReference>
<dbReference type="Pfam" id="PF01728">
    <property type="entry name" value="FtsJ"/>
    <property type="match status" value="1"/>
</dbReference>
<dbReference type="PIRSF" id="PIRSF005461">
    <property type="entry name" value="23S_rRNA_mtase"/>
    <property type="match status" value="1"/>
</dbReference>
<dbReference type="SUPFAM" id="SSF53335">
    <property type="entry name" value="S-adenosyl-L-methionine-dependent methyltransferases"/>
    <property type="match status" value="1"/>
</dbReference>
<reference key="1">
    <citation type="journal article" date="2008" name="Genome Res.">
        <title>Genome sequence of the beta-rhizobium Cupriavidus taiwanensis and comparative genomics of rhizobia.</title>
        <authorList>
            <person name="Amadou C."/>
            <person name="Pascal G."/>
            <person name="Mangenot S."/>
            <person name="Glew M."/>
            <person name="Bontemps C."/>
            <person name="Capela D."/>
            <person name="Carrere S."/>
            <person name="Cruveiller S."/>
            <person name="Dossat C."/>
            <person name="Lajus A."/>
            <person name="Marchetti M."/>
            <person name="Poinsot V."/>
            <person name="Rouy Z."/>
            <person name="Servin B."/>
            <person name="Saad M."/>
            <person name="Schenowitz C."/>
            <person name="Barbe V."/>
            <person name="Batut J."/>
            <person name="Medigue C."/>
            <person name="Masson-Boivin C."/>
        </authorList>
    </citation>
    <scope>NUCLEOTIDE SEQUENCE [LARGE SCALE GENOMIC DNA]</scope>
    <source>
        <strain>DSM 17343 / BCRC 17206 / CCUG 44338 / CIP 107171 / LMG 19424 / R1</strain>
    </source>
</reference>
<gene>
    <name evidence="1" type="primary">rlmE</name>
    <name evidence="1" type="synonym">ftsJ</name>
    <name evidence="1" type="synonym">rrmJ</name>
    <name type="ordered locus">RALTA_A1979</name>
</gene>
<proteinExistence type="inferred from homology"/>
<name>RLME_CUPTR</name>
<sequence>MAKNKFNHSWLHDHINDPYVKMAQREGYRARAAYKLKEIDEQDKLIRPGQVIVDLGAAPGSWSQYARNKLADSPRARDGRIDGAVVAIDLLPMEPVADVTFIQGDFREESVFRELESVVLDASGGNKIDLVLSDMAPNLSGVASADAARIEYLCDLALEFAQAHLKPEGALLVKCFHGSGYSQIVEKFKRQFKVVAKRKPKASRDKSSETFILGRYLKTVD</sequence>
<keyword id="KW-0963">Cytoplasm</keyword>
<keyword id="KW-0489">Methyltransferase</keyword>
<keyword id="KW-0698">rRNA processing</keyword>
<keyword id="KW-0949">S-adenosyl-L-methionine</keyword>
<keyword id="KW-0808">Transferase</keyword>
<accession>B3R1S2</accession>
<feature type="chain" id="PRO_1000194987" description="Ribosomal RNA large subunit methyltransferase E">
    <location>
        <begin position="1"/>
        <end position="221"/>
    </location>
</feature>
<feature type="active site" description="Proton acceptor" evidence="1">
    <location>
        <position position="174"/>
    </location>
</feature>
<feature type="binding site" evidence="1">
    <location>
        <position position="60"/>
    </location>
    <ligand>
        <name>S-adenosyl-L-methionine</name>
        <dbReference type="ChEBI" id="CHEBI:59789"/>
    </ligand>
</feature>
<feature type="binding site" evidence="1">
    <location>
        <position position="62"/>
    </location>
    <ligand>
        <name>S-adenosyl-L-methionine</name>
        <dbReference type="ChEBI" id="CHEBI:59789"/>
    </ligand>
</feature>
<feature type="binding site" evidence="1">
    <location>
        <position position="89"/>
    </location>
    <ligand>
        <name>S-adenosyl-L-methionine</name>
        <dbReference type="ChEBI" id="CHEBI:59789"/>
    </ligand>
</feature>
<feature type="binding site" evidence="1">
    <location>
        <position position="105"/>
    </location>
    <ligand>
        <name>S-adenosyl-L-methionine</name>
        <dbReference type="ChEBI" id="CHEBI:59789"/>
    </ligand>
</feature>
<feature type="binding site" evidence="1">
    <location>
        <position position="134"/>
    </location>
    <ligand>
        <name>S-adenosyl-L-methionine</name>
        <dbReference type="ChEBI" id="CHEBI:59789"/>
    </ligand>
</feature>
<protein>
    <recommendedName>
        <fullName evidence="1">Ribosomal RNA large subunit methyltransferase E</fullName>
        <ecNumber evidence="1">2.1.1.166</ecNumber>
    </recommendedName>
    <alternativeName>
        <fullName evidence="1">23S rRNA Um2552 methyltransferase</fullName>
    </alternativeName>
    <alternativeName>
        <fullName evidence="1">rRNA (uridine-2'-O-)-methyltransferase</fullName>
    </alternativeName>
</protein>
<comment type="function">
    <text evidence="1">Specifically methylates the uridine in position 2552 of 23S rRNA at the 2'-O position of the ribose in the fully assembled 50S ribosomal subunit.</text>
</comment>
<comment type="catalytic activity">
    <reaction evidence="1">
        <text>uridine(2552) in 23S rRNA + S-adenosyl-L-methionine = 2'-O-methyluridine(2552) in 23S rRNA + S-adenosyl-L-homocysteine + H(+)</text>
        <dbReference type="Rhea" id="RHEA:42720"/>
        <dbReference type="Rhea" id="RHEA-COMP:10202"/>
        <dbReference type="Rhea" id="RHEA-COMP:10203"/>
        <dbReference type="ChEBI" id="CHEBI:15378"/>
        <dbReference type="ChEBI" id="CHEBI:57856"/>
        <dbReference type="ChEBI" id="CHEBI:59789"/>
        <dbReference type="ChEBI" id="CHEBI:65315"/>
        <dbReference type="ChEBI" id="CHEBI:74478"/>
        <dbReference type="EC" id="2.1.1.166"/>
    </reaction>
</comment>
<comment type="subcellular location">
    <subcellularLocation>
        <location evidence="1">Cytoplasm</location>
    </subcellularLocation>
</comment>
<comment type="similarity">
    <text evidence="1">Belongs to the class I-like SAM-binding methyltransferase superfamily. RNA methyltransferase RlmE family.</text>
</comment>